<protein>
    <recommendedName>
        <fullName evidence="8">Carbonyl reductase [NADPH] 1</fullName>
        <ecNumber evidence="1">1.1.1.184</ecNumber>
    </recommendedName>
    <alternativeName>
        <fullName>15-hydroxyprostaglandin dehydrogenase [NADP(+)]</fullName>
        <ecNumber evidence="3">1.1.1.196</ecNumber>
        <ecNumber evidence="1">1.1.1.197</ecNumber>
    </alternativeName>
    <alternativeName>
        <fullName evidence="3">20-beta-hydroxysteroid dehydrogenase</fullName>
    </alternativeName>
    <alternativeName>
        <fullName>Alcohol dehydrogenase [NAD(P)+] CBR1</fullName>
        <ecNumber evidence="1">1.1.1.71</ecNumber>
    </alternativeName>
    <alternativeName>
        <fullName>NADPH-dependent carbonyl reductase 1</fullName>
    </alternativeName>
    <alternativeName>
        <fullName evidence="3">Prostaglandin 9-ketoreductase</fullName>
        <shortName evidence="3">PG-9-KR</shortName>
    </alternativeName>
    <alternativeName>
        <fullName evidence="3">Prostaglandin-E(2) 9-reductase</fullName>
        <ecNumber evidence="3">1.1.1.189</ecNumber>
    </alternativeName>
</protein>
<gene>
    <name evidence="9" type="primary">Cbr1</name>
    <name type="synonym">Cbr</name>
</gene>
<evidence type="ECO:0000250" key="1">
    <source>
        <dbReference type="UniProtKB" id="P16152"/>
    </source>
</evidence>
<evidence type="ECO:0000250" key="2">
    <source>
        <dbReference type="UniProtKB" id="P48758"/>
    </source>
</evidence>
<evidence type="ECO:0000250" key="3">
    <source>
        <dbReference type="UniProtKB" id="Q28960"/>
    </source>
</evidence>
<evidence type="ECO:0000255" key="4">
    <source>
        <dbReference type="PROSITE-ProRule" id="PRU10001"/>
    </source>
</evidence>
<evidence type="ECO:0000256" key="5">
    <source>
        <dbReference type="SAM" id="MobiDB-lite"/>
    </source>
</evidence>
<evidence type="ECO:0000269" key="6">
    <source>
    </source>
</evidence>
<evidence type="ECO:0000269" key="7">
    <source>
    </source>
</evidence>
<evidence type="ECO:0000305" key="8"/>
<evidence type="ECO:0000312" key="9">
    <source>
        <dbReference type="RGD" id="2286"/>
    </source>
</evidence>
<evidence type="ECO:0007744" key="10">
    <source>
    </source>
</evidence>
<dbReference type="EC" id="1.1.1.184" evidence="1"/>
<dbReference type="EC" id="1.1.1.196" evidence="3"/>
<dbReference type="EC" id="1.1.1.197" evidence="1"/>
<dbReference type="EC" id="1.1.1.71" evidence="1"/>
<dbReference type="EC" id="1.1.1.189" evidence="3"/>
<dbReference type="EMBL" id="X84349">
    <property type="protein sequence ID" value="CAA59088.1"/>
    <property type="molecule type" value="mRNA"/>
</dbReference>
<dbReference type="EMBL" id="X95986">
    <property type="protein sequence ID" value="CAA65230.1"/>
    <property type="molecule type" value="Genomic_DNA"/>
</dbReference>
<dbReference type="EMBL" id="D89069">
    <property type="protein sequence ID" value="BAA19007.1"/>
    <property type="molecule type" value="mRNA"/>
</dbReference>
<dbReference type="EMBL" id="BC105893">
    <property type="protein sequence ID" value="AAI05894.1"/>
    <property type="molecule type" value="mRNA"/>
</dbReference>
<dbReference type="PIR" id="S68982">
    <property type="entry name" value="JC5284"/>
</dbReference>
<dbReference type="RefSeq" id="NP_062043.1">
    <property type="nucleotide sequence ID" value="NM_019170.2"/>
</dbReference>
<dbReference type="SMR" id="P47727"/>
<dbReference type="BioGRID" id="247902">
    <property type="interactions" value="1"/>
</dbReference>
<dbReference type="FunCoup" id="P47727">
    <property type="interactions" value="916"/>
</dbReference>
<dbReference type="IntAct" id="P47727">
    <property type="interactions" value="1"/>
</dbReference>
<dbReference type="MINT" id="P47727"/>
<dbReference type="STRING" id="10116.ENSRNOP00000064050"/>
<dbReference type="GlyGen" id="P47727">
    <property type="glycosylation" value="1 site"/>
</dbReference>
<dbReference type="iPTMnet" id="P47727"/>
<dbReference type="PhosphoSitePlus" id="P47727"/>
<dbReference type="jPOST" id="P47727"/>
<dbReference type="PaxDb" id="10116-ENSRNOP00000064050"/>
<dbReference type="GeneID" id="29224"/>
<dbReference type="KEGG" id="rno:29224"/>
<dbReference type="UCSC" id="RGD:2286">
    <property type="organism name" value="rat"/>
</dbReference>
<dbReference type="AGR" id="RGD:2286"/>
<dbReference type="CTD" id="873"/>
<dbReference type="RGD" id="2286">
    <property type="gene designation" value="Cbr1"/>
</dbReference>
<dbReference type="eggNOG" id="KOG1208">
    <property type="taxonomic scope" value="Eukaryota"/>
</dbReference>
<dbReference type="InParanoid" id="P47727"/>
<dbReference type="PhylomeDB" id="P47727"/>
<dbReference type="TreeFam" id="TF329359"/>
<dbReference type="Reactome" id="R-RNO-2162123">
    <property type="pathway name" value="Synthesis of Prostaglandins (PG) and Thromboxanes (TX)"/>
</dbReference>
<dbReference type="PRO" id="PR:P47727"/>
<dbReference type="Proteomes" id="UP000002494">
    <property type="component" value="Unplaced"/>
</dbReference>
<dbReference type="GO" id="GO:0005737">
    <property type="term" value="C:cytoplasm"/>
    <property type="evidence" value="ECO:0007669"/>
    <property type="project" value="UniProtKB-SubCell"/>
</dbReference>
<dbReference type="GO" id="GO:0005902">
    <property type="term" value="C:microvillus"/>
    <property type="evidence" value="ECO:0000314"/>
    <property type="project" value="RGD"/>
</dbReference>
<dbReference type="GO" id="GO:0047021">
    <property type="term" value="F:15-hydroxyprostaglandin dehydrogenase (NADP+) activity"/>
    <property type="evidence" value="ECO:0000250"/>
    <property type="project" value="UniProtKB"/>
</dbReference>
<dbReference type="GO" id="GO:0047020">
    <property type="term" value="F:15-hydroxyprostaglandin-D dehydrogenase (NADP+) activity"/>
    <property type="evidence" value="ECO:0007669"/>
    <property type="project" value="UniProtKB-EC"/>
</dbReference>
<dbReference type="GO" id="GO:0004090">
    <property type="term" value="F:carbonyl reductase (NADPH) activity"/>
    <property type="evidence" value="ECO:0000314"/>
    <property type="project" value="RGD"/>
</dbReference>
<dbReference type="GO" id="GO:0016655">
    <property type="term" value="F:oxidoreductase activity, acting on NAD(P)H, quinone or similar compound as acceptor"/>
    <property type="evidence" value="ECO:0000266"/>
    <property type="project" value="RGD"/>
</dbReference>
<dbReference type="GO" id="GO:0016616">
    <property type="term" value="F:oxidoreductase activity, acting on the CH-OH group of donors, NAD or NADP as acceptor"/>
    <property type="evidence" value="ECO:0000266"/>
    <property type="project" value="RGD"/>
</dbReference>
<dbReference type="GO" id="GO:0050221">
    <property type="term" value="F:prostaglandin E2 9-reductase activity"/>
    <property type="evidence" value="ECO:0000250"/>
    <property type="project" value="UniProtKB"/>
</dbReference>
<dbReference type="GO" id="GO:0160163">
    <property type="term" value="F:S-nitrosoglutathione reductase (NADPH) activity"/>
    <property type="evidence" value="ECO:0007669"/>
    <property type="project" value="RHEA"/>
</dbReference>
<dbReference type="GO" id="GO:0030855">
    <property type="term" value="P:epithelial cell differentiation"/>
    <property type="evidence" value="ECO:0000266"/>
    <property type="project" value="RGD"/>
</dbReference>
<dbReference type="GO" id="GO:0008211">
    <property type="term" value="P:glucocorticoid metabolic process"/>
    <property type="evidence" value="ECO:0000266"/>
    <property type="project" value="RGD"/>
</dbReference>
<dbReference type="GO" id="GO:0001542">
    <property type="term" value="P:ovulation from ovarian follicle"/>
    <property type="evidence" value="ECO:0000270"/>
    <property type="project" value="RGD"/>
</dbReference>
<dbReference type="GO" id="GO:0042376">
    <property type="term" value="P:phylloquinone catabolic process"/>
    <property type="evidence" value="ECO:0000314"/>
    <property type="project" value="RGD"/>
</dbReference>
<dbReference type="GO" id="GO:2000379">
    <property type="term" value="P:positive regulation of reactive oxygen species metabolic process"/>
    <property type="evidence" value="ECO:0000266"/>
    <property type="project" value="RGD"/>
</dbReference>
<dbReference type="GO" id="GO:1905344">
    <property type="term" value="P:prostaglandin catabolic process"/>
    <property type="evidence" value="ECO:0000314"/>
    <property type="project" value="RGD"/>
</dbReference>
<dbReference type="GO" id="GO:0032355">
    <property type="term" value="P:response to estradiol"/>
    <property type="evidence" value="ECO:0000314"/>
    <property type="project" value="RGD"/>
</dbReference>
<dbReference type="GO" id="GO:0034698">
    <property type="term" value="P:response to gonadotropin"/>
    <property type="evidence" value="ECO:0000270"/>
    <property type="project" value="RGD"/>
</dbReference>
<dbReference type="GO" id="GO:0032496">
    <property type="term" value="P:response to lipopolysaccharide"/>
    <property type="evidence" value="ECO:0000270"/>
    <property type="project" value="RGD"/>
</dbReference>
<dbReference type="GO" id="GO:0032570">
    <property type="term" value="P:response to progesterone"/>
    <property type="evidence" value="ECO:0000314"/>
    <property type="project" value="RGD"/>
</dbReference>
<dbReference type="GO" id="GO:0033574">
    <property type="term" value="P:response to testosterone"/>
    <property type="evidence" value="ECO:0000270"/>
    <property type="project" value="RGD"/>
</dbReference>
<dbReference type="GO" id="GO:0006706">
    <property type="term" value="P:steroid catabolic process"/>
    <property type="evidence" value="ECO:0000314"/>
    <property type="project" value="RGD"/>
</dbReference>
<dbReference type="GO" id="GO:0042373">
    <property type="term" value="P:vitamin K metabolic process"/>
    <property type="evidence" value="ECO:0000250"/>
    <property type="project" value="UniProtKB"/>
</dbReference>
<dbReference type="GO" id="GO:0006805">
    <property type="term" value="P:xenobiotic metabolic process"/>
    <property type="evidence" value="ECO:0000250"/>
    <property type="project" value="UniProtKB"/>
</dbReference>
<dbReference type="CDD" id="cd05324">
    <property type="entry name" value="carb_red_PTCR-like_SDR_c"/>
    <property type="match status" value="1"/>
</dbReference>
<dbReference type="FunFam" id="3.40.50.720:FF:000164">
    <property type="entry name" value="Carbonyl reductase [NADPH] 1"/>
    <property type="match status" value="1"/>
</dbReference>
<dbReference type="Gene3D" id="3.40.50.720">
    <property type="entry name" value="NAD(P)-binding Rossmann-like Domain"/>
    <property type="match status" value="1"/>
</dbReference>
<dbReference type="InterPro" id="IPR045313">
    <property type="entry name" value="CBR1-like"/>
</dbReference>
<dbReference type="InterPro" id="IPR036291">
    <property type="entry name" value="NAD(P)-bd_dom_sf"/>
</dbReference>
<dbReference type="InterPro" id="IPR020904">
    <property type="entry name" value="Sc_DH/Rdtase_CS"/>
</dbReference>
<dbReference type="InterPro" id="IPR002347">
    <property type="entry name" value="SDR_fam"/>
</dbReference>
<dbReference type="PANTHER" id="PTHR43963">
    <property type="entry name" value="CARBONYL REDUCTASE 1-RELATED"/>
    <property type="match status" value="1"/>
</dbReference>
<dbReference type="PANTHER" id="PTHR43963:SF2">
    <property type="entry name" value="CARBONYL REDUCTASE [NADPH] 1"/>
    <property type="match status" value="1"/>
</dbReference>
<dbReference type="Pfam" id="PF00106">
    <property type="entry name" value="adh_short"/>
    <property type="match status" value="1"/>
</dbReference>
<dbReference type="PRINTS" id="PR00081">
    <property type="entry name" value="GDHRDH"/>
</dbReference>
<dbReference type="PRINTS" id="PR00080">
    <property type="entry name" value="SDRFAMILY"/>
</dbReference>
<dbReference type="SUPFAM" id="SSF51735">
    <property type="entry name" value="NAD(P)-binding Rossmann-fold domains"/>
    <property type="match status" value="1"/>
</dbReference>
<dbReference type="PROSITE" id="PS00061">
    <property type="entry name" value="ADH_SHORT"/>
    <property type="match status" value="1"/>
</dbReference>
<comment type="function">
    <text evidence="1 3 6 7">NADPH-dependent reductase with broad substrate specificity. Catalyzes the reduction of a wide variety of carbonyl compounds including quinones, prostaglandins, menadione, plus various xenobiotics (PubMed:7705364, PubMed:8198567). Catalyzes the reduction of the antitumor anthracyclines doxorubicin and daunorubicin to the cardiotoxic compounds doxorubicinol and daunorubicinol (By similarity). Can convert prostaglandin E to prostaglandin F2-alpha (By similarity). Can bind glutathione, which explains its higher affinity for glutathione-conjugated substrates. Catalyzes the reduction of S-nitrosoglutathione. In addition, participates in the glucocorticoid metabolism by catalyzing the NADPH-dependent cortisol/corticosterone into 20beta-dihydrocortisol (20b-DHF) or 20beta-corticosterone (20b-DHB), which are weak agonists of NR3C1 and NR3C2 in adipose tissue (By similarity).</text>
</comment>
<comment type="catalytic activity">
    <reaction evidence="1">
        <text>a secondary alcohol + NADP(+) = a ketone + NADPH + H(+)</text>
        <dbReference type="Rhea" id="RHEA:19257"/>
        <dbReference type="ChEBI" id="CHEBI:15378"/>
        <dbReference type="ChEBI" id="CHEBI:17087"/>
        <dbReference type="ChEBI" id="CHEBI:35681"/>
        <dbReference type="ChEBI" id="CHEBI:57783"/>
        <dbReference type="ChEBI" id="CHEBI:58349"/>
        <dbReference type="EC" id="1.1.1.184"/>
    </reaction>
</comment>
<comment type="catalytic activity">
    <reaction evidence="3">
        <text>prostaglandin F2alpha + NADP(+) = prostaglandin E2 + NADPH + H(+)</text>
        <dbReference type="Rhea" id="RHEA:24508"/>
        <dbReference type="ChEBI" id="CHEBI:15378"/>
        <dbReference type="ChEBI" id="CHEBI:57404"/>
        <dbReference type="ChEBI" id="CHEBI:57783"/>
        <dbReference type="ChEBI" id="CHEBI:58349"/>
        <dbReference type="ChEBI" id="CHEBI:606564"/>
        <dbReference type="EC" id="1.1.1.189"/>
    </reaction>
    <physiologicalReaction direction="right-to-left" evidence="3">
        <dbReference type="Rhea" id="RHEA:24510"/>
    </physiologicalReaction>
</comment>
<comment type="catalytic activity">
    <reaction evidence="1">
        <text>prostaglandin E1 + NADP(+) = 15-oxoprostaglandin E1 + NADPH + H(+)</text>
        <dbReference type="Rhea" id="RHEA:11636"/>
        <dbReference type="ChEBI" id="CHEBI:15378"/>
        <dbReference type="ChEBI" id="CHEBI:57397"/>
        <dbReference type="ChEBI" id="CHEBI:57401"/>
        <dbReference type="ChEBI" id="CHEBI:57783"/>
        <dbReference type="ChEBI" id="CHEBI:58349"/>
        <dbReference type="EC" id="1.1.1.197"/>
    </reaction>
    <physiologicalReaction direction="left-to-right" evidence="1">
        <dbReference type="Rhea" id="RHEA:11637"/>
    </physiologicalReaction>
</comment>
<comment type="catalytic activity">
    <reaction evidence="6 7">
        <text>menadione + NADPH + H(+) = menadiol + NADP(+)</text>
        <dbReference type="Rhea" id="RHEA:63492"/>
        <dbReference type="ChEBI" id="CHEBI:6746"/>
        <dbReference type="ChEBI" id="CHEBI:15378"/>
        <dbReference type="ChEBI" id="CHEBI:28869"/>
        <dbReference type="ChEBI" id="CHEBI:57783"/>
        <dbReference type="ChEBI" id="CHEBI:58349"/>
    </reaction>
</comment>
<comment type="catalytic activity">
    <reaction evidence="3">
        <text>prostaglandin D2 + NADP(+) = 15-oxoprostaglandin D2 + NADPH + H(+)</text>
        <dbReference type="Rhea" id="RHEA:20744"/>
        <dbReference type="ChEBI" id="CHEBI:15378"/>
        <dbReference type="ChEBI" id="CHEBI:57406"/>
        <dbReference type="ChEBI" id="CHEBI:57408"/>
        <dbReference type="ChEBI" id="CHEBI:57783"/>
        <dbReference type="ChEBI" id="CHEBI:58349"/>
        <dbReference type="EC" id="1.1.1.196"/>
    </reaction>
    <physiologicalReaction direction="left-to-right" evidence="3">
        <dbReference type="Rhea" id="RHEA:20745"/>
    </physiologicalReaction>
</comment>
<comment type="catalytic activity">
    <reaction evidence="3">
        <text>prostaglandin E2 + NADP(+) = 15-oxoprostaglandin E2 + NADPH + H(+)</text>
        <dbReference type="Rhea" id="RHEA:63476"/>
        <dbReference type="ChEBI" id="CHEBI:15378"/>
        <dbReference type="ChEBI" id="CHEBI:57400"/>
        <dbReference type="ChEBI" id="CHEBI:57783"/>
        <dbReference type="ChEBI" id="CHEBI:58349"/>
        <dbReference type="ChEBI" id="CHEBI:606564"/>
    </reaction>
    <physiologicalReaction direction="left-to-right" evidence="3">
        <dbReference type="Rhea" id="RHEA:63477"/>
    </physiologicalReaction>
</comment>
<comment type="catalytic activity">
    <reaction evidence="3">
        <text>prostaglandin F2alpha + NADP(+) = 15-oxoprostaglandin F2alpha + NADPH + H(+)</text>
        <dbReference type="Rhea" id="RHEA:63480"/>
        <dbReference type="ChEBI" id="CHEBI:15378"/>
        <dbReference type="ChEBI" id="CHEBI:57404"/>
        <dbReference type="ChEBI" id="CHEBI:57783"/>
        <dbReference type="ChEBI" id="CHEBI:58349"/>
        <dbReference type="ChEBI" id="CHEBI:133409"/>
    </reaction>
    <physiologicalReaction direction="left-to-right" evidence="3">
        <dbReference type="Rhea" id="RHEA:63481"/>
    </physiologicalReaction>
</comment>
<comment type="catalytic activity">
    <reaction evidence="1">
        <text>daunorubicin + NADPH + H(+) = 13-dihydrodaunorubicin + NADP(+)</text>
        <dbReference type="Rhea" id="RHEA:63504"/>
        <dbReference type="ChEBI" id="CHEBI:15378"/>
        <dbReference type="ChEBI" id="CHEBI:57783"/>
        <dbReference type="ChEBI" id="CHEBI:58349"/>
        <dbReference type="ChEBI" id="CHEBI:64677"/>
        <dbReference type="ChEBI" id="CHEBI:75296"/>
    </reaction>
    <physiologicalReaction direction="left-to-right" evidence="1">
        <dbReference type="Rhea" id="RHEA:63505"/>
    </physiologicalReaction>
</comment>
<comment type="catalytic activity">
    <reaction evidence="3">
        <text>S-nitrosoglutathione + NADPH + H(+) = S-(hydroxysulfenamide)glutathione + NADP(+)</text>
        <dbReference type="Rhea" id="RHEA:63500"/>
        <dbReference type="ChEBI" id="CHEBI:15378"/>
        <dbReference type="ChEBI" id="CHEBI:57783"/>
        <dbReference type="ChEBI" id="CHEBI:58349"/>
        <dbReference type="ChEBI" id="CHEBI:145544"/>
        <dbReference type="ChEBI" id="CHEBI:229723"/>
    </reaction>
</comment>
<comment type="catalytic activity">
    <reaction evidence="1">
        <text>a primary alcohol + NADP(+) = an aldehyde + NADPH + H(+)</text>
        <dbReference type="Rhea" id="RHEA:15937"/>
        <dbReference type="ChEBI" id="CHEBI:15378"/>
        <dbReference type="ChEBI" id="CHEBI:15734"/>
        <dbReference type="ChEBI" id="CHEBI:17478"/>
        <dbReference type="ChEBI" id="CHEBI:57783"/>
        <dbReference type="ChEBI" id="CHEBI:58349"/>
        <dbReference type="EC" id="1.1.1.71"/>
    </reaction>
</comment>
<comment type="catalytic activity">
    <reaction evidence="1">
        <text>cortisol + NADPH + H(+) = 20beta-dihydrocortisol + NADP(+)</text>
        <dbReference type="Rhea" id="RHEA:70215"/>
        <dbReference type="ChEBI" id="CHEBI:15378"/>
        <dbReference type="ChEBI" id="CHEBI:17650"/>
        <dbReference type="ChEBI" id="CHEBI:57783"/>
        <dbReference type="ChEBI" id="CHEBI:58349"/>
        <dbReference type="ChEBI" id="CHEBI:139311"/>
    </reaction>
    <physiologicalReaction direction="left-to-right" evidence="1">
        <dbReference type="Rhea" id="RHEA:70216"/>
    </physiologicalReaction>
</comment>
<comment type="catalytic activity">
    <reaction evidence="2">
        <text>corticosterone + NADPH + H(+) = 20beta-dihydrocorticosterone + NADP(+)</text>
        <dbReference type="Rhea" id="RHEA:70219"/>
        <dbReference type="ChEBI" id="CHEBI:15378"/>
        <dbReference type="ChEBI" id="CHEBI:16827"/>
        <dbReference type="ChEBI" id="CHEBI:57783"/>
        <dbReference type="ChEBI" id="CHEBI:58349"/>
        <dbReference type="ChEBI" id="CHEBI:189050"/>
    </reaction>
    <physiologicalReaction direction="left-to-right" evidence="2">
        <dbReference type="Rhea" id="RHEA:70220"/>
    </physiologicalReaction>
</comment>
<comment type="biophysicochemical properties">
    <kinetics>
        <KM evidence="6">0.1 mM for menadione</KM>
        <KM evidence="6">0.24 mM for prostaglandin E2</KM>
    </kinetics>
</comment>
<comment type="subunit">
    <text evidence="3">Monomer.</text>
</comment>
<comment type="subcellular location">
    <subcellularLocation>
        <location evidence="3">Cytoplasm</location>
    </subcellularLocation>
</comment>
<comment type="similarity">
    <text evidence="8">Belongs to the short-chain dehydrogenases/reductases (SDR) family.</text>
</comment>
<feature type="initiator methionine" description="Removed" evidence="1">
    <location>
        <position position="1"/>
    </location>
</feature>
<feature type="chain" id="PRO_0000054607" description="Carbonyl reductase [NADPH] 1">
    <location>
        <begin position="2"/>
        <end position="277"/>
    </location>
</feature>
<feature type="region of interest" description="Disordered" evidence="5">
    <location>
        <begin position="258"/>
        <end position="277"/>
    </location>
</feature>
<feature type="active site" description="Proton acceptor" evidence="4">
    <location>
        <position position="194"/>
    </location>
</feature>
<feature type="binding site" evidence="1">
    <location>
        <begin position="10"/>
        <end position="34"/>
    </location>
    <ligand>
        <name>NADP(+)</name>
        <dbReference type="ChEBI" id="CHEBI:58349"/>
    </ligand>
</feature>
<feature type="binding site" evidence="1">
    <location>
        <begin position="63"/>
        <end position="64"/>
    </location>
    <ligand>
        <name>NADP(+)</name>
        <dbReference type="ChEBI" id="CHEBI:58349"/>
    </ligand>
</feature>
<feature type="binding site" evidence="1">
    <location>
        <position position="90"/>
    </location>
    <ligand>
        <name>NADP(+)</name>
        <dbReference type="ChEBI" id="CHEBI:58349"/>
    </ligand>
</feature>
<feature type="binding site" evidence="1">
    <location>
        <begin position="95"/>
        <end position="97"/>
    </location>
    <ligand>
        <name>glutathione</name>
        <dbReference type="ChEBI" id="CHEBI:57925"/>
    </ligand>
</feature>
<feature type="binding site" evidence="1">
    <location>
        <position position="106"/>
    </location>
    <ligand>
        <name>glutathione</name>
        <dbReference type="ChEBI" id="CHEBI:57925"/>
    </ligand>
</feature>
<feature type="binding site" evidence="1">
    <location>
        <position position="140"/>
    </location>
    <ligand>
        <name>substrate</name>
    </ligand>
</feature>
<feature type="binding site" evidence="1">
    <location>
        <begin position="193"/>
        <end position="194"/>
    </location>
    <ligand>
        <name>glutathione</name>
        <dbReference type="ChEBI" id="CHEBI:57925"/>
    </ligand>
</feature>
<feature type="binding site" evidence="1">
    <location>
        <begin position="194"/>
        <end position="198"/>
    </location>
    <ligand>
        <name>NADP(+)</name>
        <dbReference type="ChEBI" id="CHEBI:58349"/>
    </ligand>
</feature>
<feature type="binding site" evidence="1">
    <location>
        <begin position="231"/>
        <end position="233"/>
    </location>
    <ligand>
        <name>NADP(+)</name>
        <dbReference type="ChEBI" id="CHEBI:58349"/>
    </ligand>
</feature>
<feature type="modified residue" description="N-acetylserine" evidence="1">
    <location>
        <position position="2"/>
    </location>
</feature>
<feature type="modified residue" description="Phosphoserine" evidence="10">
    <location>
        <position position="2"/>
    </location>
</feature>
<feature type="modified residue" description="N6-1-carboxyethyl lysine" evidence="1">
    <location>
        <position position="239"/>
    </location>
</feature>
<feature type="sequence conflict" description="In Ref. 4; AA sequence." evidence="8" ref="4">
    <original>V</original>
    <variation>T</variation>
    <location>
        <position position="22"/>
    </location>
</feature>
<feature type="sequence conflict" description="In Ref. 5; AA sequence." evidence="8" ref="5">
    <original>V</original>
    <variation>D</variation>
    <location>
        <position position="135"/>
    </location>
</feature>
<feature type="sequence conflict" description="In Ref. 5; AA sequence." evidence="8" ref="5">
    <original>V</original>
    <variation>H</variation>
    <location>
        <position position="138"/>
    </location>
</feature>
<feature type="sequence conflict" description="In Ref. 2; BAA19007." evidence="8" ref="2">
    <original>SVSL</original>
    <variation>GMSR</variation>
    <location>
        <begin position="141"/>
        <end position="144"/>
    </location>
</feature>
<feature type="sequence conflict" description="In Ref. 3; AAI05894." evidence="8" ref="3">
    <original>I</original>
    <variation>V</variation>
    <location>
        <position position="176"/>
    </location>
</feature>
<feature type="sequence conflict" description="In Ref. 3; AAI05894." evidence="8" ref="3">
    <original>N</original>
    <variation>T</variation>
    <location>
        <position position="213"/>
    </location>
</feature>
<feature type="sequence conflict" description="In Ref. 2; BAA19007." evidence="8" ref="2">
    <original>A</original>
    <variation>T</variation>
    <location>
        <position position="236"/>
    </location>
</feature>
<feature type="sequence conflict" description="In Ref. 2; BAA19007." evidence="8" ref="2">
    <original>K</original>
    <variation>E</variation>
    <location>
        <position position="239"/>
    </location>
</feature>
<reference key="1">
    <citation type="journal article" date="1995" name="Eur. J. Biochem.">
        <title>Cloning and expression of carbonyl reductase from rat testis.</title>
        <authorList>
            <person name="Wermuth B."/>
            <person name="Maeder-Heinemann G."/>
            <person name="Ernst E."/>
        </authorList>
    </citation>
    <scope>NUCLEOTIDE SEQUENCE [GENOMIC DNA / MRNA]</scope>
    <scope>FUNCTION</scope>
    <scope>CATALYTIC ACTIVITY</scope>
    <scope>BIOPHYSICOCHEMICAL PROPERTIES</scope>
    <source>
        <strain>Sprague-Dawley</strain>
        <tissue>Testis</tissue>
    </source>
</reference>
<reference key="2">
    <citation type="journal article" date="1997" name="Biochem. Biophys. Res. Commun.">
        <title>Identification of two closely related genes, inducible and noninducible carbonyl reductases in the rat ovary.</title>
        <authorList>
            <person name="Aoki H."/>
            <person name="Okada T."/>
            <person name="Mizutani T."/>
            <person name="Numata Y."/>
            <person name="Minegishi T."/>
            <person name="Miyamoto K."/>
        </authorList>
    </citation>
    <scope>NUCLEOTIDE SEQUENCE [MRNA]</scope>
</reference>
<reference key="3">
    <citation type="journal article" date="2004" name="Genome Res.">
        <title>The status, quality, and expansion of the NIH full-length cDNA project: the Mammalian Gene Collection (MGC).</title>
        <authorList>
            <consortium name="The MGC Project Team"/>
        </authorList>
    </citation>
    <scope>NUCLEOTIDE SEQUENCE [LARGE SCALE MRNA]</scope>
    <source>
        <tissue>Spleen</tissue>
    </source>
</reference>
<reference key="4">
    <citation type="submission" date="2007-04" db="UniProtKB">
        <authorList>
            <person name="Lubec G."/>
            <person name="Diao W."/>
            <person name="Afjehi-Sadat L."/>
            <person name="Chen W.-Q."/>
        </authorList>
    </citation>
    <scope>PROTEIN SEQUENCE OF 6-14; 17-24 AND 59-71</scope>
    <scope>IDENTIFICATION BY MASS SPECTROMETRY</scope>
    <source>
        <strain>Sprague-Dawley</strain>
        <tissue>Hippocampus</tissue>
        <tissue>Spinal cord</tissue>
    </source>
</reference>
<reference key="5">
    <citation type="journal article" date="1994" name="Biochem. Biophys. Res. Commun.">
        <title>A novel 34 kDa glutathione-binding protein in mature rat ovary.</title>
        <authorList>
            <person name="Toft E."/>
            <person name="Soederstroem M."/>
            <person name="Ahlberg M.B."/>
            <person name="DePierre J.W."/>
        </authorList>
    </citation>
    <scope>PROTEIN SEQUENCE OF 104-138</scope>
    <scope>FUNCTION</scope>
    <scope>CATALYTIC ACTIVITY</scope>
</reference>
<reference key="6">
    <citation type="journal article" date="2012" name="Nat. Commun.">
        <title>Quantitative maps of protein phosphorylation sites across 14 different rat organs and tissues.</title>
        <authorList>
            <person name="Lundby A."/>
            <person name="Secher A."/>
            <person name="Lage K."/>
            <person name="Nordsborg N.B."/>
            <person name="Dmytriyev A."/>
            <person name="Lundby C."/>
            <person name="Olsen J.V."/>
        </authorList>
    </citation>
    <scope>PHOSPHORYLATION [LARGE SCALE ANALYSIS] AT SER-2</scope>
    <scope>IDENTIFICATION BY MASS SPECTROMETRY [LARGE SCALE ANALYSIS]</scope>
</reference>
<keyword id="KW-0007">Acetylation</keyword>
<keyword id="KW-0963">Cytoplasm</keyword>
<keyword id="KW-0903">Direct protein sequencing</keyword>
<keyword id="KW-0443">Lipid metabolism</keyword>
<keyword id="KW-0521">NADP</keyword>
<keyword id="KW-0560">Oxidoreductase</keyword>
<keyword id="KW-0597">Phosphoprotein</keyword>
<keyword id="KW-1185">Reference proteome</keyword>
<proteinExistence type="evidence at protein level"/>
<name>CBR1_RAT</name>
<sequence length="277" mass="30578">MSSDRPVALVTGANKGIGFAIVRDLCRKFLGDVVLTARDESRGHEAVKQLQTEGLSPRFHQLDIDNPQSIRALRDFLLQEYGGLNVLVNNAGIAFKVVDPTPFHIQAEVTMKTNFFGTQDVCKELLPIIKPQGRVVNVSSSVSLRALKSCSPELQQKFRSETITEEELVGLMNKFIEDAKKGVHAKEGWPNSAYGVTKIGVTVLSRIYARKLNEERREDKILLNACCPGWVRTDMAGPKATKSPEEGAETPVYLALLPPGAEGPHGQFVQDKKVEPW</sequence>
<organism>
    <name type="scientific">Rattus norvegicus</name>
    <name type="common">Rat</name>
    <dbReference type="NCBI Taxonomy" id="10116"/>
    <lineage>
        <taxon>Eukaryota</taxon>
        <taxon>Metazoa</taxon>
        <taxon>Chordata</taxon>
        <taxon>Craniata</taxon>
        <taxon>Vertebrata</taxon>
        <taxon>Euteleostomi</taxon>
        <taxon>Mammalia</taxon>
        <taxon>Eutheria</taxon>
        <taxon>Euarchontoglires</taxon>
        <taxon>Glires</taxon>
        <taxon>Rodentia</taxon>
        <taxon>Myomorpha</taxon>
        <taxon>Muroidea</taxon>
        <taxon>Muridae</taxon>
        <taxon>Murinae</taxon>
        <taxon>Rattus</taxon>
    </lineage>
</organism>
<accession>P47727</accession>
<accession>O08558</accession>
<accession>Q3KR58</accession>